<feature type="chain" id="PRO_1000206266" description="Xylose isomerase">
    <location>
        <begin position="1"/>
        <end position="440"/>
    </location>
</feature>
<feature type="binding site" evidence="1">
    <location>
        <position position="307"/>
    </location>
    <ligand>
        <name>Mg(2+)</name>
        <dbReference type="ChEBI" id="CHEBI:18420"/>
        <label>2</label>
    </ligand>
</feature>
<feature type="binding site" evidence="1">
    <location>
        <position position="309"/>
    </location>
    <ligand>
        <name>Mg(2+)</name>
        <dbReference type="ChEBI" id="CHEBI:18420"/>
        <label>2</label>
    </ligand>
</feature>
<protein>
    <recommendedName>
        <fullName evidence="1">Xylose isomerase</fullName>
        <ecNumber evidence="1">5.3.1.5</ecNumber>
    </recommendedName>
</protein>
<dbReference type="EC" id="5.3.1.5" evidence="1"/>
<dbReference type="EMBL" id="CP001657">
    <property type="protein sequence ID" value="ACT15169.1"/>
    <property type="molecule type" value="Genomic_DNA"/>
</dbReference>
<dbReference type="RefSeq" id="WP_015842241.1">
    <property type="nucleotide sequence ID" value="NC_012917.1"/>
</dbReference>
<dbReference type="SMR" id="C6DIH5"/>
<dbReference type="STRING" id="561230.PC1_4155"/>
<dbReference type="KEGG" id="pct:PC1_4155"/>
<dbReference type="eggNOG" id="COG2115">
    <property type="taxonomic scope" value="Bacteria"/>
</dbReference>
<dbReference type="HOGENOM" id="CLU_037261_1_0_6"/>
<dbReference type="OrthoDB" id="9763981at2"/>
<dbReference type="Proteomes" id="UP000002736">
    <property type="component" value="Chromosome"/>
</dbReference>
<dbReference type="GO" id="GO:0005737">
    <property type="term" value="C:cytoplasm"/>
    <property type="evidence" value="ECO:0007669"/>
    <property type="project" value="UniProtKB-SubCell"/>
</dbReference>
<dbReference type="GO" id="GO:0000287">
    <property type="term" value="F:magnesium ion binding"/>
    <property type="evidence" value="ECO:0007669"/>
    <property type="project" value="UniProtKB-UniRule"/>
</dbReference>
<dbReference type="GO" id="GO:0009045">
    <property type="term" value="F:xylose isomerase activity"/>
    <property type="evidence" value="ECO:0007669"/>
    <property type="project" value="UniProtKB-UniRule"/>
</dbReference>
<dbReference type="GO" id="GO:0042732">
    <property type="term" value="P:D-xylose metabolic process"/>
    <property type="evidence" value="ECO:0007669"/>
    <property type="project" value="UniProtKB-UniRule"/>
</dbReference>
<dbReference type="FunFam" id="3.20.20.150:FF:000002">
    <property type="entry name" value="Xylose isomerase"/>
    <property type="match status" value="1"/>
</dbReference>
<dbReference type="Gene3D" id="3.20.20.150">
    <property type="entry name" value="Divalent-metal-dependent TIM barrel enzymes"/>
    <property type="match status" value="1"/>
</dbReference>
<dbReference type="HAMAP" id="MF_00455">
    <property type="entry name" value="Xylose_isom_A"/>
    <property type="match status" value="1"/>
</dbReference>
<dbReference type="InterPro" id="IPR036237">
    <property type="entry name" value="Xyl_isomerase-like_sf"/>
</dbReference>
<dbReference type="InterPro" id="IPR013452">
    <property type="entry name" value="Xylose_isom_bac"/>
</dbReference>
<dbReference type="InterPro" id="IPR001998">
    <property type="entry name" value="Xylose_isomerase"/>
</dbReference>
<dbReference type="NCBIfam" id="NF003998">
    <property type="entry name" value="PRK05474.1"/>
    <property type="match status" value="1"/>
</dbReference>
<dbReference type="NCBIfam" id="TIGR02630">
    <property type="entry name" value="xylose_isom_A"/>
    <property type="match status" value="1"/>
</dbReference>
<dbReference type="PANTHER" id="PTHR48408">
    <property type="match status" value="1"/>
</dbReference>
<dbReference type="PANTHER" id="PTHR48408:SF1">
    <property type="entry name" value="XYLOSE ISOMERASE"/>
    <property type="match status" value="1"/>
</dbReference>
<dbReference type="PRINTS" id="PR00688">
    <property type="entry name" value="XYLOSISMRASE"/>
</dbReference>
<dbReference type="SUPFAM" id="SSF51658">
    <property type="entry name" value="Xylose isomerase-like"/>
    <property type="match status" value="1"/>
</dbReference>
<dbReference type="PROSITE" id="PS51415">
    <property type="entry name" value="XYLOSE_ISOMERASE"/>
    <property type="match status" value="1"/>
</dbReference>
<gene>
    <name evidence="1" type="primary">xylA</name>
    <name type="ordered locus">PC1_4155</name>
</gene>
<reference key="1">
    <citation type="submission" date="2009-07" db="EMBL/GenBank/DDBJ databases">
        <title>Complete sequence of Pectobacterium carotovorum subsp. carotovorum PC1.</title>
        <authorList>
            <consortium name="US DOE Joint Genome Institute"/>
            <person name="Lucas S."/>
            <person name="Copeland A."/>
            <person name="Lapidus A."/>
            <person name="Glavina del Rio T."/>
            <person name="Tice H."/>
            <person name="Bruce D."/>
            <person name="Goodwin L."/>
            <person name="Pitluck S."/>
            <person name="Munk A.C."/>
            <person name="Brettin T."/>
            <person name="Detter J.C."/>
            <person name="Han C."/>
            <person name="Tapia R."/>
            <person name="Larimer F."/>
            <person name="Land M."/>
            <person name="Hauser L."/>
            <person name="Kyrpides N."/>
            <person name="Mikhailova N."/>
            <person name="Balakrishnan V."/>
            <person name="Glasner J."/>
            <person name="Perna N.T."/>
        </authorList>
    </citation>
    <scope>NUCLEOTIDE SEQUENCE [LARGE SCALE GENOMIC DNA]</scope>
    <source>
        <strain>PC1</strain>
    </source>
</reference>
<comment type="catalytic activity">
    <reaction evidence="1">
        <text>alpha-D-xylose = alpha-D-xylulofuranose</text>
        <dbReference type="Rhea" id="RHEA:22816"/>
        <dbReference type="ChEBI" id="CHEBI:28518"/>
        <dbReference type="ChEBI" id="CHEBI:188998"/>
        <dbReference type="EC" id="5.3.1.5"/>
    </reaction>
</comment>
<comment type="cofactor">
    <cofactor evidence="1">
        <name>Mg(2+)</name>
        <dbReference type="ChEBI" id="CHEBI:18420"/>
    </cofactor>
    <text evidence="1">Binds 2 magnesium ions per subunit.</text>
</comment>
<comment type="subunit">
    <text evidence="1">Homotetramer.</text>
</comment>
<comment type="subcellular location">
    <subcellularLocation>
        <location evidence="1">Cytoplasm</location>
    </subcellularLocation>
</comment>
<comment type="similarity">
    <text evidence="1">Belongs to the xylose isomerase family.</text>
</comment>
<accession>C6DIH5</accession>
<evidence type="ECO:0000255" key="1">
    <source>
        <dbReference type="HAMAP-Rule" id="MF_00455"/>
    </source>
</evidence>
<name>XYLA_PECCP</name>
<sequence length="440" mass="49687">MQAYFEQIEKVRYEGSQSDNPFAFRHYNPDQEILGKRMADHLRFAVAYWHTFCWNGADMFGVGSFARPWQQSGDALELAKRKADIAFEFFQKLSVPYYCFHDVDIAPEGNSLKEYLHNFAVITDVLAEKQQDSGVKLLWGTANCFTHPRYGAGAATNPDPDVFAWAATQVFTAMNATKKLGGENYVLWGGREGYETLLNTDLRQEREQIGRFMQMVVEHKHKIGFQGTLLIEPKPQEPTKHQYDYDVATVYGFLKQFGLEKEIKVNVEANHATLAGHSFHHEIATAVALGVFGSVDANRGDPQLGWDTDQFPNSVEENTLIMYEILKAGGFTTGGLNFDAKVRRQSTDRYDLFHAHIGAMDTMALALKAAARMIEDDKLNQLVAKRYAGWNGELGQQILQGKASLESLAHYAESHQLAPQHQSGQQELLENLVNRHLYPK</sequence>
<keyword id="KW-0119">Carbohydrate metabolism</keyword>
<keyword id="KW-0963">Cytoplasm</keyword>
<keyword id="KW-0413">Isomerase</keyword>
<keyword id="KW-0460">Magnesium</keyword>
<keyword id="KW-0479">Metal-binding</keyword>
<keyword id="KW-0859">Xylose metabolism</keyword>
<organism>
    <name type="scientific">Pectobacterium carotovorum subsp. carotovorum (strain PC1)</name>
    <dbReference type="NCBI Taxonomy" id="561230"/>
    <lineage>
        <taxon>Bacteria</taxon>
        <taxon>Pseudomonadati</taxon>
        <taxon>Pseudomonadota</taxon>
        <taxon>Gammaproteobacteria</taxon>
        <taxon>Enterobacterales</taxon>
        <taxon>Pectobacteriaceae</taxon>
        <taxon>Pectobacterium</taxon>
    </lineage>
</organism>
<proteinExistence type="inferred from homology"/>